<keyword id="KW-0997">Cell inner membrane</keyword>
<keyword id="KW-1003">Cell membrane</keyword>
<keyword id="KW-0472">Membrane</keyword>
<feature type="chain" id="PRO_1000137045" description="Protein Syd">
    <location>
        <begin position="1"/>
        <end position="183"/>
    </location>
</feature>
<organism>
    <name type="scientific">Yersinia pseudotuberculosis serotype IB (strain PB1/+)</name>
    <dbReference type="NCBI Taxonomy" id="502801"/>
    <lineage>
        <taxon>Bacteria</taxon>
        <taxon>Pseudomonadati</taxon>
        <taxon>Pseudomonadota</taxon>
        <taxon>Gammaproteobacteria</taxon>
        <taxon>Enterobacterales</taxon>
        <taxon>Yersiniaceae</taxon>
        <taxon>Yersinia</taxon>
    </lineage>
</organism>
<proteinExistence type="inferred from homology"/>
<gene>
    <name evidence="1" type="primary">syd</name>
    <name type="ordered locus">YPTS_3132</name>
</gene>
<name>SYDP_YERPB</name>
<protein>
    <recommendedName>
        <fullName evidence="1">Protein Syd</fullName>
    </recommendedName>
</protein>
<evidence type="ECO:0000255" key="1">
    <source>
        <dbReference type="HAMAP-Rule" id="MF_01104"/>
    </source>
</evidence>
<accession>B2JZ43</accession>
<reference key="1">
    <citation type="submission" date="2008-04" db="EMBL/GenBank/DDBJ databases">
        <title>Complete sequence of Yersinia pseudotuberculosis PB1/+.</title>
        <authorList>
            <person name="Copeland A."/>
            <person name="Lucas S."/>
            <person name="Lapidus A."/>
            <person name="Glavina del Rio T."/>
            <person name="Dalin E."/>
            <person name="Tice H."/>
            <person name="Bruce D."/>
            <person name="Goodwin L."/>
            <person name="Pitluck S."/>
            <person name="Munk A.C."/>
            <person name="Brettin T."/>
            <person name="Detter J.C."/>
            <person name="Han C."/>
            <person name="Tapia R."/>
            <person name="Schmutz J."/>
            <person name="Larimer F."/>
            <person name="Land M."/>
            <person name="Hauser L."/>
            <person name="Challacombe J.F."/>
            <person name="Green L."/>
            <person name="Lindler L.E."/>
            <person name="Nikolich M.P."/>
            <person name="Richardson P."/>
        </authorList>
    </citation>
    <scope>NUCLEOTIDE SEQUENCE [LARGE SCALE GENOMIC DNA]</scope>
    <source>
        <strain>PB1/+</strain>
    </source>
</reference>
<sequence length="183" mass="20780">MDLNISTALRSFTQRYIDLWQQQTGHLPASKELYGVPSPCIVETGEDQVFWQPQAFLPEATLTNIERALEIQLHPDIHDFYTQQYAGDMMADLGNHRFTLLQVWSEDDFIRLQENLIGHLVTQKRLKLSPTLFLATTSSEMTMASLCNVSGNVVLEQFGSDKRTLLASTLSHFLDALRPVLPE</sequence>
<dbReference type="EMBL" id="CP001048">
    <property type="protein sequence ID" value="ACC90087.1"/>
    <property type="molecule type" value="Genomic_DNA"/>
</dbReference>
<dbReference type="RefSeq" id="WP_002212123.1">
    <property type="nucleotide sequence ID" value="NZ_CP009780.1"/>
</dbReference>
<dbReference type="SMR" id="B2JZ43"/>
<dbReference type="GeneID" id="57977526"/>
<dbReference type="KEGG" id="ypb:YPTS_3132"/>
<dbReference type="PATRIC" id="fig|502801.10.peg.2564"/>
<dbReference type="GO" id="GO:0009898">
    <property type="term" value="C:cytoplasmic side of plasma membrane"/>
    <property type="evidence" value="ECO:0007669"/>
    <property type="project" value="InterPro"/>
</dbReference>
<dbReference type="CDD" id="cd16323">
    <property type="entry name" value="Syd"/>
    <property type="match status" value="1"/>
</dbReference>
<dbReference type="Gene3D" id="3.40.1580.20">
    <property type="entry name" value="Syd protein"/>
    <property type="match status" value="1"/>
</dbReference>
<dbReference type="HAMAP" id="MF_01104">
    <property type="entry name" value="Syd"/>
    <property type="match status" value="1"/>
</dbReference>
<dbReference type="InterPro" id="IPR009948">
    <property type="entry name" value="Syd"/>
</dbReference>
<dbReference type="InterPro" id="IPR038228">
    <property type="entry name" value="Syd_sf"/>
</dbReference>
<dbReference type="NCBIfam" id="NF003439">
    <property type="entry name" value="PRK04968.1"/>
    <property type="match status" value="1"/>
</dbReference>
<dbReference type="Pfam" id="PF07348">
    <property type="entry name" value="Syd"/>
    <property type="match status" value="1"/>
</dbReference>
<comment type="function">
    <text evidence="1">Interacts with the SecY protein in vivo. May bind preferentially to an uncomplexed state of SecY, thus functioning either as a chelating agent for excess SecY in the cell or as a regulatory factor that negatively controls the translocase function.</text>
</comment>
<comment type="subcellular location">
    <subcellularLocation>
        <location evidence="1">Cell inner membrane</location>
        <topology evidence="1">Peripheral membrane protein</topology>
        <orientation evidence="1">Cytoplasmic side</orientation>
    </subcellularLocation>
    <text evidence="1">Loosely associated with the cytoplasmic side of the inner membrane, probably via SecY.</text>
</comment>
<comment type="similarity">
    <text evidence="1">Belongs to the Syd family.</text>
</comment>